<proteinExistence type="evidence at protein level"/>
<feature type="initiator methionine" description="Removed" evidence="7">
    <location>
        <position position="1"/>
    </location>
</feature>
<feature type="chain" id="PRO_0000153213" description="Glutamine synthetase">
    <location>
        <begin position="2"/>
        <end position="473"/>
    </location>
</feature>
<feature type="domain" description="GS beta-grasp" evidence="5">
    <location>
        <begin position="18"/>
        <end position="102"/>
    </location>
</feature>
<feature type="domain" description="GS catalytic" evidence="6">
    <location>
        <begin position="110"/>
        <end position="473"/>
    </location>
</feature>
<feature type="binding site" evidence="4">
    <location>
        <position position="133"/>
    </location>
    <ligand>
        <name>Mg(2+)</name>
        <dbReference type="ChEBI" id="CHEBI:18420"/>
        <label>1</label>
    </ligand>
</feature>
<feature type="binding site" evidence="4">
    <location>
        <position position="135"/>
    </location>
    <ligand>
        <name>Mg(2+)</name>
        <dbReference type="ChEBI" id="CHEBI:18420"/>
        <label>2</label>
    </ligand>
</feature>
<feature type="binding site" evidence="4">
    <location>
        <position position="207"/>
    </location>
    <ligand>
        <name>ATP</name>
        <dbReference type="ChEBI" id="CHEBI:30616"/>
    </ligand>
</feature>
<feature type="binding site" evidence="4">
    <location>
        <position position="212"/>
    </location>
    <ligand>
        <name>Mg(2+)</name>
        <dbReference type="ChEBI" id="CHEBI:18420"/>
        <label>2</label>
    </ligand>
</feature>
<feature type="binding site" evidence="4">
    <location>
        <position position="220"/>
    </location>
    <ligand>
        <name>Mg(2+)</name>
        <dbReference type="ChEBI" id="CHEBI:18420"/>
        <label>2</label>
    </ligand>
</feature>
<feature type="binding site" evidence="4">
    <location>
        <begin position="264"/>
        <end position="265"/>
    </location>
    <ligand>
        <name>L-glutamate</name>
        <dbReference type="ChEBI" id="CHEBI:29985"/>
    </ligand>
</feature>
<feature type="binding site" evidence="2">
    <location>
        <position position="265"/>
    </location>
    <ligand>
        <name>L-glutamate</name>
        <dbReference type="ChEBI" id="CHEBI:29985"/>
    </ligand>
</feature>
<feature type="binding site" evidence="4">
    <location>
        <position position="269"/>
    </location>
    <ligand>
        <name>Mg(2+)</name>
        <dbReference type="ChEBI" id="CHEBI:18420"/>
        <label>1</label>
    </ligand>
</feature>
<feature type="binding site" evidence="4">
    <location>
        <begin position="271"/>
        <end position="273"/>
    </location>
    <ligand>
        <name>ATP</name>
        <dbReference type="ChEBI" id="CHEBI:30616"/>
    </ligand>
</feature>
<feature type="binding site" evidence="3">
    <location>
        <position position="273"/>
    </location>
    <ligand>
        <name>ATP</name>
        <dbReference type="ChEBI" id="CHEBI:30616"/>
    </ligand>
</feature>
<feature type="binding site" evidence="4">
    <location>
        <position position="324"/>
    </location>
    <ligand>
        <name>L-glutamate</name>
        <dbReference type="ChEBI" id="CHEBI:29985"/>
    </ligand>
</feature>
<feature type="binding site" evidence="1">
    <location>
        <position position="330"/>
    </location>
    <ligand>
        <name>L-glutamate</name>
        <dbReference type="ChEBI" id="CHEBI:29985"/>
    </ligand>
</feature>
<feature type="binding site" evidence="4">
    <location>
        <position position="342"/>
    </location>
    <ligand>
        <name>ATP</name>
        <dbReference type="ChEBI" id="CHEBI:30616"/>
    </ligand>
</feature>
<feature type="binding site" evidence="4">
    <location>
        <position position="342"/>
    </location>
    <ligand>
        <name>L-glutamate</name>
        <dbReference type="ChEBI" id="CHEBI:29985"/>
    </ligand>
</feature>
<feature type="binding site" evidence="4">
    <location>
        <position position="347"/>
    </location>
    <ligand>
        <name>ATP</name>
        <dbReference type="ChEBI" id="CHEBI:30616"/>
    </ligand>
</feature>
<feature type="binding site" evidence="3">
    <location>
        <position position="357"/>
    </location>
    <ligand>
        <name>ATP</name>
        <dbReference type="ChEBI" id="CHEBI:30616"/>
    </ligand>
</feature>
<feature type="binding site" evidence="4">
    <location>
        <position position="362"/>
    </location>
    <ligand>
        <name>Mg(2+)</name>
        <dbReference type="ChEBI" id="CHEBI:18420"/>
        <label>1</label>
    </ligand>
</feature>
<feature type="binding site" evidence="4">
    <location>
        <position position="364"/>
    </location>
    <ligand>
        <name>L-glutamate</name>
        <dbReference type="ChEBI" id="CHEBI:29985"/>
    </ligand>
</feature>
<feature type="sequence conflict" description="In Ref. 1; CAC20905." evidence="9" ref="1">
    <original>D</original>
    <variation>V</variation>
    <location>
        <position position="185"/>
    </location>
</feature>
<feature type="sequence conflict" description="In Ref. 1; CAC20905." evidence="9" ref="1">
    <original>FTIE</original>
    <variation>TIEA</variation>
    <location>
        <begin position="204"/>
        <end position="207"/>
    </location>
</feature>
<feature type="sequence conflict" description="In Ref. 1; CAC20905." evidence="9" ref="1">
    <original>A</original>
    <variation>H</variation>
    <location>
        <position position="209"/>
    </location>
</feature>
<feature type="sequence conflict" description="In Ref. 1; CAC20905." evidence="9" ref="1">
    <original>HEVATAGQGEIDFRFSTLADTADKVQVLKYVTKNIASKRGMIATFMPKP</original>
    <variation>EVATAGQGDIDFRFSTLADTADKVQVLKYVTKNIASKRGMIATFMPKPF</variation>
    <location>
        <begin position="211"/>
        <end position="259"/>
    </location>
</feature>
<feature type="sequence conflict" description="In Ref. 1; CAC20905." evidence="9" ref="1">
    <original>FGDNGSGMHTHFSLWTKDGKNLMYDPNDEYAELSQIGRY</original>
    <variation>GDNGSGMHTHFSLWTKDGKNLMYDPNDEYAELSQIGRYI</variation>
    <location>
        <begin position="261"/>
        <end position="299"/>
    </location>
</feature>
<feature type="sequence conflict" description="In Ref. 1; CAC20905." evidence="9" ref="1">
    <original>IGG</original>
    <variation>GPL</variation>
    <location>
        <begin position="301"/>
        <end position="303"/>
    </location>
</feature>
<feature type="sequence conflict" description="In Ref. 1; CAC20905." evidence="9" ref="1">
    <original>LEHGRALSAI</original>
    <variation>EHGRALSAIV</variation>
    <location>
        <begin position="305"/>
        <end position="314"/>
    </location>
</feature>
<feature type="sequence conflict" description="In Ref. 1; CAC20905." evidence="9" ref="1">
    <original>P</original>
    <variation>G</variation>
    <location>
        <position position="317"/>
    </location>
</feature>
<sequence length="473" mass="53586">MPGLPKNEHEALEFLKSNNIKWVDLQFTDLLGKLQHITIPSNEFDESSFKVGFGKLDGSSIKGFTSIYESDMVLLPIPQTMTLIPWMQGVARVLTKVFWGGGKGRFERDPRGIAEEAEKYQSEQGYVSYFGPELEFFVFDKVEVDASLPQSGTGYKIHSREAPWSKNGGYVIRYKEGYYPASPVDQLMDIRLEIISTLVDYFGFTIEAAHHEVATAGQGEIDFRFSTLADTADKVQVLKYVTKNIASKRGMIATFMPKPFFGDNGSGMHTHFSLWTKDGKNLMYDPNDEYAELSQIGRYIIGGLLEHGRALSAIVAPTTNSYRRLVPGYEAPVYLVWSKSNRSAAIRIPAYYKGMEKAKRLEYRPPDPSSNPYLVFSAILMAGLDGIRRKLDPGDPVDENIYHMSEEKKRSLKIRELPGSLDEALNELESDNEFLKPVFNSSILQAYLDLKKEEAKMMQLYPHPMEIYQYLDS</sequence>
<comment type="function">
    <text evidence="7">Probably involved in nitrogen metabolism via ammonium assimilation. Catalyzes the ATP-dependent biosynthesis of glutamine from glutamate and ammonia.</text>
</comment>
<comment type="catalytic activity">
    <reaction evidence="10">
        <text>L-glutamate + NH4(+) + ATP = L-glutamine + ADP + phosphate + H(+)</text>
        <dbReference type="Rhea" id="RHEA:16169"/>
        <dbReference type="ChEBI" id="CHEBI:15378"/>
        <dbReference type="ChEBI" id="CHEBI:28938"/>
        <dbReference type="ChEBI" id="CHEBI:29985"/>
        <dbReference type="ChEBI" id="CHEBI:30616"/>
        <dbReference type="ChEBI" id="CHEBI:43474"/>
        <dbReference type="ChEBI" id="CHEBI:58359"/>
        <dbReference type="ChEBI" id="CHEBI:456216"/>
        <dbReference type="EC" id="6.3.1.2"/>
    </reaction>
</comment>
<comment type="cofactor">
    <cofactor evidence="7">
        <name>Mg(2+)</name>
        <dbReference type="ChEBI" id="CHEBI:18420"/>
    </cofactor>
    <cofactor evidence="7">
        <name>Mn(2+)</name>
        <dbReference type="ChEBI" id="CHEBI:29035"/>
    </cofactor>
    <text evidence="4">Binds 2 Mg(2+) or Mn(2+) ions per subunit.</text>
</comment>
<comment type="activity regulation">
    <text evidence="7">Strongly inhibited by glycine and L-alanine. AMP at 10 mM displays a very weak inhibitory effect. The activity of this enzyme is not controlled by adenylation.</text>
</comment>
<comment type="biophysicochemical properties">
    <kinetics>
        <KM evidence="7">0.15 mM for ADP</KM>
        <KM evidence="7">0.24 mM for manganese</KM>
        <KM evidence="7">1.3 mM for L-glutamine</KM>
    </kinetics>
    <phDependence>
        <text evidence="7">Optimum pH is between 7 and 7.5.</text>
    </phDependence>
    <temperatureDependence>
        <text evidence="7">Optimum temperature is 90 degrees Celsius. In the absence of magnesium or manganese ions about 50% of the activity is lost within 100 minutes at 78 degrees Celsius, whereas more than 95% of the activity is retained in presence of 4 mM manganese ions. Magnesium ions are a less effective.</text>
    </temperatureDependence>
</comment>
<comment type="subunit">
    <text evidence="7">Oligomer of 12 subunits arranged in the form of two hexagons.</text>
</comment>
<comment type="subcellular location">
    <subcellularLocation>
        <location evidence="10">Cytoplasm</location>
    </subcellularLocation>
</comment>
<comment type="miscellaneous">
    <text evidence="7">GlnA of S.acidocaldarius is unique among the archeal glutamine synthetase since the regulatory properties suggest a position within the GS I-alpha subgroup. However, the sequence shows more pronounced similarities to the GS I-beta subgroup.</text>
</comment>
<comment type="similarity">
    <text evidence="9">Belongs to the glutamine synthetase family.</text>
</comment>
<protein>
    <recommendedName>
        <fullName evidence="8">Glutamine synthetase</fullName>
        <shortName evidence="8">GS</shortName>
        <ecNumber evidence="10">6.3.1.2</ecNumber>
    </recommendedName>
    <alternativeName>
        <fullName evidence="9">Glutamate--ammonia ligase</fullName>
    </alternativeName>
    <alternativeName>
        <fullName evidence="9">Glutamine synthetase I alpha</fullName>
        <shortName evidence="9">GSI alpha</shortName>
    </alternativeName>
</protein>
<gene>
    <name evidence="8" type="primary">glnA</name>
    <name type="ordered locus">Saci_1483</name>
</gene>
<evidence type="ECO:0000250" key="1">
    <source>
        <dbReference type="UniProtKB" id="P0A1P6"/>
    </source>
</evidence>
<evidence type="ECO:0000250" key="2">
    <source>
        <dbReference type="UniProtKB" id="P12425"/>
    </source>
</evidence>
<evidence type="ECO:0000250" key="3">
    <source>
        <dbReference type="UniProtKB" id="P77961"/>
    </source>
</evidence>
<evidence type="ECO:0000250" key="4">
    <source>
        <dbReference type="UniProtKB" id="P9WN39"/>
    </source>
</evidence>
<evidence type="ECO:0000255" key="5">
    <source>
        <dbReference type="PROSITE-ProRule" id="PRU01330"/>
    </source>
</evidence>
<evidence type="ECO:0000255" key="6">
    <source>
        <dbReference type="PROSITE-ProRule" id="PRU01331"/>
    </source>
</evidence>
<evidence type="ECO:0000269" key="7">
    <source>
    </source>
</evidence>
<evidence type="ECO:0000303" key="8">
    <source>
    </source>
</evidence>
<evidence type="ECO:0000305" key="9"/>
<evidence type="ECO:0000305" key="10">
    <source>
    </source>
</evidence>
<organism>
    <name type="scientific">Sulfolobus acidocaldarius (strain ATCC 33909 / DSM 639 / JCM 8929 / NBRC 15157 / NCIMB 11770)</name>
    <dbReference type="NCBI Taxonomy" id="330779"/>
    <lineage>
        <taxon>Archaea</taxon>
        <taxon>Thermoproteota</taxon>
        <taxon>Thermoprotei</taxon>
        <taxon>Sulfolobales</taxon>
        <taxon>Sulfolobaceae</taxon>
        <taxon>Sulfolobus</taxon>
    </lineage>
</organism>
<accession>Q9HH09</accession>
<accession>Q4J8S1</accession>
<keyword id="KW-0067">ATP-binding</keyword>
<keyword id="KW-0963">Cytoplasm</keyword>
<keyword id="KW-0903">Direct protein sequencing</keyword>
<keyword id="KW-0436">Ligase</keyword>
<keyword id="KW-0460">Magnesium</keyword>
<keyword id="KW-0464">Manganese</keyword>
<keyword id="KW-0479">Metal-binding</keyword>
<keyword id="KW-0547">Nucleotide-binding</keyword>
<keyword id="KW-0597">Phosphoprotein</keyword>
<keyword id="KW-1185">Reference proteome</keyword>
<reference key="1">
    <citation type="journal article" date="1998" name="Biol. Chem.">
        <title>The glutamine synthetase from the hyperthermoacidophilic crenarcheon Sulfolobus acidocaldarius: isolation, characterization and sequencing of the gene.</title>
        <authorList>
            <person name="Yin Z.M."/>
            <person name="Purschke W.G."/>
            <person name="Schaefer G."/>
            <person name="Schmidt C.L."/>
        </authorList>
    </citation>
    <scope>NUCLEOTIDE SEQUENCE [GENOMIC DNA]</scope>
    <scope>PROTEIN SEQUENCE OF 2-26</scope>
    <scope>FUNCTION</scope>
    <scope>CATALYTIC ACTIVITY</scope>
    <scope>BIOPHYSICOCHEMICAL PROPERTIES</scope>
    <scope>ACTIVITY REGULATION</scope>
    <scope>COFACTOR</scope>
    <scope>SUBCELLULAR LOCATION</scope>
    <scope>SUBUNIT</scope>
    <source>
        <strain>ATCC 33909 / DSM 639 / JCM 8929 / NBRC 15157 / NCIMB 11770</strain>
    </source>
</reference>
<reference key="2">
    <citation type="journal article" date="2005" name="J. Bacteriol.">
        <title>The genome of Sulfolobus acidocaldarius, a model organism of the Crenarchaeota.</title>
        <authorList>
            <person name="Chen L."/>
            <person name="Bruegger K."/>
            <person name="Skovgaard M."/>
            <person name="Redder P."/>
            <person name="She Q."/>
            <person name="Torarinsson E."/>
            <person name="Greve B."/>
            <person name="Awayez M."/>
            <person name="Zibat A."/>
            <person name="Klenk H.-P."/>
            <person name="Garrett R.A."/>
        </authorList>
    </citation>
    <scope>NUCLEOTIDE SEQUENCE [LARGE SCALE GENOMIC DNA]</scope>
    <source>
        <strain>ATCC 33909 / DSM 639 / JCM 8929 / NBRC 15157 / NCIMB 11770</strain>
    </source>
</reference>
<name>GLNA_SULAC</name>
<dbReference type="EC" id="6.3.1.2" evidence="10"/>
<dbReference type="EMBL" id="AJ224678">
    <property type="protein sequence ID" value="CAC20905.1"/>
    <property type="molecule type" value="Genomic_DNA"/>
</dbReference>
<dbReference type="EMBL" id="CP000077">
    <property type="protein sequence ID" value="AAY80804.1"/>
    <property type="molecule type" value="Genomic_DNA"/>
</dbReference>
<dbReference type="RefSeq" id="WP_011278306.1">
    <property type="nucleotide sequence ID" value="NC_007181.1"/>
</dbReference>
<dbReference type="SMR" id="Q9HH09"/>
<dbReference type="STRING" id="330779.Saci_1483"/>
<dbReference type="GeneID" id="14551978"/>
<dbReference type="GeneID" id="78441826"/>
<dbReference type="KEGG" id="sai:Saci_1483"/>
<dbReference type="PATRIC" id="fig|330779.12.peg.1427"/>
<dbReference type="eggNOG" id="arCOG01909">
    <property type="taxonomic scope" value="Archaea"/>
</dbReference>
<dbReference type="HOGENOM" id="CLU_017290_1_2_2"/>
<dbReference type="BRENDA" id="6.3.1.2">
    <property type="organism ID" value="6160"/>
</dbReference>
<dbReference type="Proteomes" id="UP000001018">
    <property type="component" value="Chromosome"/>
</dbReference>
<dbReference type="GO" id="GO:0005737">
    <property type="term" value="C:cytoplasm"/>
    <property type="evidence" value="ECO:0007669"/>
    <property type="project" value="UniProtKB-SubCell"/>
</dbReference>
<dbReference type="GO" id="GO:0016020">
    <property type="term" value="C:membrane"/>
    <property type="evidence" value="ECO:0007669"/>
    <property type="project" value="TreeGrafter"/>
</dbReference>
<dbReference type="GO" id="GO:0005524">
    <property type="term" value="F:ATP binding"/>
    <property type="evidence" value="ECO:0007669"/>
    <property type="project" value="UniProtKB-KW"/>
</dbReference>
<dbReference type="GO" id="GO:0004356">
    <property type="term" value="F:glutamine synthetase activity"/>
    <property type="evidence" value="ECO:0007669"/>
    <property type="project" value="UniProtKB-EC"/>
</dbReference>
<dbReference type="GO" id="GO:0046872">
    <property type="term" value="F:metal ion binding"/>
    <property type="evidence" value="ECO:0007669"/>
    <property type="project" value="UniProtKB-KW"/>
</dbReference>
<dbReference type="GO" id="GO:0006542">
    <property type="term" value="P:glutamine biosynthetic process"/>
    <property type="evidence" value="ECO:0007669"/>
    <property type="project" value="InterPro"/>
</dbReference>
<dbReference type="GO" id="GO:0019740">
    <property type="term" value="P:nitrogen utilization"/>
    <property type="evidence" value="ECO:0007669"/>
    <property type="project" value="TreeGrafter"/>
</dbReference>
<dbReference type="FunFam" id="3.30.590.10:FF:000005">
    <property type="entry name" value="Probable glutamine synthetase"/>
    <property type="match status" value="1"/>
</dbReference>
<dbReference type="Gene3D" id="3.10.20.70">
    <property type="entry name" value="Glutamine synthetase, N-terminal domain"/>
    <property type="match status" value="1"/>
</dbReference>
<dbReference type="Gene3D" id="3.30.590.10">
    <property type="entry name" value="Glutamine synthetase/guanido kinase, catalytic domain"/>
    <property type="match status" value="1"/>
</dbReference>
<dbReference type="InterPro" id="IPR008147">
    <property type="entry name" value="Gln_synt_N"/>
</dbReference>
<dbReference type="InterPro" id="IPR036651">
    <property type="entry name" value="Gln_synt_N_sf"/>
</dbReference>
<dbReference type="InterPro" id="IPR014746">
    <property type="entry name" value="Gln_synth/guanido_kin_cat_dom"/>
</dbReference>
<dbReference type="InterPro" id="IPR008146">
    <property type="entry name" value="Gln_synth_cat_dom"/>
</dbReference>
<dbReference type="InterPro" id="IPR027303">
    <property type="entry name" value="Gln_synth_gly_rich_site"/>
</dbReference>
<dbReference type="InterPro" id="IPR004809">
    <property type="entry name" value="Gln_synth_I"/>
</dbReference>
<dbReference type="InterPro" id="IPR027302">
    <property type="entry name" value="Gln_synth_N_conserv_site"/>
</dbReference>
<dbReference type="NCBIfam" id="TIGR00653">
    <property type="entry name" value="GlnA"/>
    <property type="match status" value="1"/>
</dbReference>
<dbReference type="PANTHER" id="PTHR43407">
    <property type="entry name" value="GLUTAMINE SYNTHETASE"/>
    <property type="match status" value="1"/>
</dbReference>
<dbReference type="PANTHER" id="PTHR43407:SF1">
    <property type="entry name" value="LENGSIN"/>
    <property type="match status" value="1"/>
</dbReference>
<dbReference type="Pfam" id="PF00120">
    <property type="entry name" value="Gln-synt_C"/>
    <property type="match status" value="1"/>
</dbReference>
<dbReference type="Pfam" id="PF03951">
    <property type="entry name" value="Gln-synt_N"/>
    <property type="match status" value="1"/>
</dbReference>
<dbReference type="SMART" id="SM01230">
    <property type="entry name" value="Gln-synt_C"/>
    <property type="match status" value="1"/>
</dbReference>
<dbReference type="SUPFAM" id="SSF54368">
    <property type="entry name" value="Glutamine synthetase, N-terminal domain"/>
    <property type="match status" value="1"/>
</dbReference>
<dbReference type="SUPFAM" id="SSF55931">
    <property type="entry name" value="Glutamine synthetase/guanido kinase"/>
    <property type="match status" value="1"/>
</dbReference>
<dbReference type="PROSITE" id="PS00180">
    <property type="entry name" value="GLNA_1"/>
    <property type="match status" value="1"/>
</dbReference>
<dbReference type="PROSITE" id="PS00181">
    <property type="entry name" value="GLNA_ATP"/>
    <property type="match status" value="1"/>
</dbReference>
<dbReference type="PROSITE" id="PS51986">
    <property type="entry name" value="GS_BETA_GRASP"/>
    <property type="match status" value="1"/>
</dbReference>
<dbReference type="PROSITE" id="PS51987">
    <property type="entry name" value="GS_CATALYTIC"/>
    <property type="match status" value="1"/>
</dbReference>